<organism>
    <name type="scientific">Tropheryma whipplei (strain Twist)</name>
    <name type="common">Whipple's bacillus</name>
    <dbReference type="NCBI Taxonomy" id="203267"/>
    <lineage>
        <taxon>Bacteria</taxon>
        <taxon>Bacillati</taxon>
        <taxon>Actinomycetota</taxon>
        <taxon>Actinomycetes</taxon>
        <taxon>Micrococcales</taxon>
        <taxon>Tropherymataceae</taxon>
        <taxon>Tropheryma</taxon>
    </lineage>
</organism>
<feature type="chain" id="PRO_0000154741" description="Large ribosomal subunit protein uL10">
    <location>
        <begin position="1"/>
        <end position="166"/>
    </location>
</feature>
<comment type="function">
    <text evidence="1">Forms part of the ribosomal stalk, playing a central role in the interaction of the ribosome with GTP-bound translation factors.</text>
</comment>
<comment type="subunit">
    <text evidence="1">Part of the ribosomal stalk of the 50S ribosomal subunit. The N-terminus interacts with L11 and the large rRNA to form the base of the stalk. The C-terminus forms an elongated spine to which L12 dimers bind in a sequential fashion forming a multimeric L10(L12)X complex.</text>
</comment>
<comment type="similarity">
    <text evidence="1">Belongs to the universal ribosomal protein uL10 family.</text>
</comment>
<protein>
    <recommendedName>
        <fullName evidence="1">Large ribosomal subunit protein uL10</fullName>
    </recommendedName>
    <alternativeName>
        <fullName evidence="2">50S ribosomal protein L10</fullName>
    </alternativeName>
</protein>
<evidence type="ECO:0000255" key="1">
    <source>
        <dbReference type="HAMAP-Rule" id="MF_00362"/>
    </source>
</evidence>
<evidence type="ECO:0000305" key="2"/>
<gene>
    <name evidence="1" type="primary">rplJ</name>
    <name type="ordered locus">TWT_712</name>
</gene>
<reference key="1">
    <citation type="journal article" date="2003" name="Genome Res.">
        <title>Tropheryma whipplei twist: a human pathogenic Actinobacteria with a reduced genome.</title>
        <authorList>
            <person name="Raoult D."/>
            <person name="Ogata H."/>
            <person name="Audic S."/>
            <person name="Robert C."/>
            <person name="Suhre K."/>
            <person name="Drancourt M."/>
            <person name="Claverie J.-M."/>
        </authorList>
    </citation>
    <scope>NUCLEOTIDE SEQUENCE [LARGE SCALE GENOMIC DNA]</scope>
    <source>
        <strain>Twist</strain>
    </source>
</reference>
<dbReference type="EMBL" id="AE014184">
    <property type="protein sequence ID" value="AAO44809.1"/>
    <property type="molecule type" value="Genomic_DNA"/>
</dbReference>
<dbReference type="RefSeq" id="WP_011096666.1">
    <property type="nucleotide sequence ID" value="NC_004572.3"/>
</dbReference>
<dbReference type="SMR" id="Q83FL0"/>
<dbReference type="STRING" id="203267.TWT_712"/>
<dbReference type="GeneID" id="67388506"/>
<dbReference type="KEGG" id="twh:TWT_712"/>
<dbReference type="eggNOG" id="COG0244">
    <property type="taxonomic scope" value="Bacteria"/>
</dbReference>
<dbReference type="HOGENOM" id="CLU_092227_1_0_11"/>
<dbReference type="OrthoDB" id="3186107at2"/>
<dbReference type="Proteomes" id="UP000002200">
    <property type="component" value="Chromosome"/>
</dbReference>
<dbReference type="GO" id="GO:0015934">
    <property type="term" value="C:large ribosomal subunit"/>
    <property type="evidence" value="ECO:0007669"/>
    <property type="project" value="InterPro"/>
</dbReference>
<dbReference type="GO" id="GO:0070180">
    <property type="term" value="F:large ribosomal subunit rRNA binding"/>
    <property type="evidence" value="ECO:0007669"/>
    <property type="project" value="UniProtKB-UniRule"/>
</dbReference>
<dbReference type="GO" id="GO:0003735">
    <property type="term" value="F:structural constituent of ribosome"/>
    <property type="evidence" value="ECO:0007669"/>
    <property type="project" value="InterPro"/>
</dbReference>
<dbReference type="GO" id="GO:0006412">
    <property type="term" value="P:translation"/>
    <property type="evidence" value="ECO:0007669"/>
    <property type="project" value="UniProtKB-UniRule"/>
</dbReference>
<dbReference type="CDD" id="cd05797">
    <property type="entry name" value="Ribosomal_L10"/>
    <property type="match status" value="1"/>
</dbReference>
<dbReference type="Gene3D" id="3.30.70.1730">
    <property type="match status" value="1"/>
</dbReference>
<dbReference type="HAMAP" id="MF_00362">
    <property type="entry name" value="Ribosomal_uL10"/>
    <property type="match status" value="1"/>
</dbReference>
<dbReference type="InterPro" id="IPR001790">
    <property type="entry name" value="Ribosomal_uL10"/>
</dbReference>
<dbReference type="InterPro" id="IPR043141">
    <property type="entry name" value="Ribosomal_uL10-like_sf"/>
</dbReference>
<dbReference type="InterPro" id="IPR022973">
    <property type="entry name" value="Ribosomal_uL10_bac"/>
</dbReference>
<dbReference type="InterPro" id="IPR047865">
    <property type="entry name" value="Ribosomal_uL10_bac_type"/>
</dbReference>
<dbReference type="InterPro" id="IPR002363">
    <property type="entry name" value="Ribosomal_uL10_CS_bac"/>
</dbReference>
<dbReference type="NCBIfam" id="NF000955">
    <property type="entry name" value="PRK00099.1-1"/>
    <property type="match status" value="1"/>
</dbReference>
<dbReference type="PANTHER" id="PTHR11560">
    <property type="entry name" value="39S RIBOSOMAL PROTEIN L10, MITOCHONDRIAL"/>
    <property type="match status" value="1"/>
</dbReference>
<dbReference type="Pfam" id="PF00466">
    <property type="entry name" value="Ribosomal_L10"/>
    <property type="match status" value="1"/>
</dbReference>
<dbReference type="SUPFAM" id="SSF160369">
    <property type="entry name" value="Ribosomal protein L10-like"/>
    <property type="match status" value="1"/>
</dbReference>
<dbReference type="PROSITE" id="PS01109">
    <property type="entry name" value="RIBOSOMAL_L10"/>
    <property type="match status" value="1"/>
</dbReference>
<accession>Q83FL0</accession>
<keyword id="KW-1185">Reference proteome</keyword>
<keyword id="KW-0687">Ribonucleoprotein</keyword>
<keyword id="KW-0689">Ribosomal protein</keyword>
<keyword id="KW-0694">RNA-binding</keyword>
<keyword id="KW-0699">rRNA-binding</keyword>
<sequence length="166" mass="17723">MTKQETVKHLVGVLSDAQAIVFTEYRGLSAAQLRALRILLRGDASYLIAKNTLARIAAQQVGFNDFAEFLRGPTAIVAVDGDIVSVAKSLRKFAETDGLLKIKGCFVDGQVFGSEHVKRLAELESREVILAKIASVTKGALSSALGLVSAPLSSAARVFVAMKNTF</sequence>
<proteinExistence type="inferred from homology"/>
<name>RL10_TROWT</name>